<organism>
    <name type="scientific">Agrobacterium fabrum (strain C58 / ATCC 33970)</name>
    <name type="common">Agrobacterium tumefaciens (strain C58)</name>
    <dbReference type="NCBI Taxonomy" id="176299"/>
    <lineage>
        <taxon>Bacteria</taxon>
        <taxon>Pseudomonadati</taxon>
        <taxon>Pseudomonadota</taxon>
        <taxon>Alphaproteobacteria</taxon>
        <taxon>Hyphomicrobiales</taxon>
        <taxon>Rhizobiaceae</taxon>
        <taxon>Rhizobium/Agrobacterium group</taxon>
        <taxon>Agrobacterium</taxon>
        <taxon>Agrobacterium tumefaciens complex</taxon>
    </lineage>
</organism>
<proteinExistence type="inferred from homology"/>
<comment type="function">
    <text evidence="1">Catalyzes the transfer of a ribosyl phosphate group from 5-phosphoribose 1-diphosphate to orotate, leading to the formation of orotidine monophosphate (OMP).</text>
</comment>
<comment type="catalytic activity">
    <reaction evidence="1">
        <text>orotidine 5'-phosphate + diphosphate = orotate + 5-phospho-alpha-D-ribose 1-diphosphate</text>
        <dbReference type="Rhea" id="RHEA:10380"/>
        <dbReference type="ChEBI" id="CHEBI:30839"/>
        <dbReference type="ChEBI" id="CHEBI:33019"/>
        <dbReference type="ChEBI" id="CHEBI:57538"/>
        <dbReference type="ChEBI" id="CHEBI:58017"/>
        <dbReference type="EC" id="2.4.2.10"/>
    </reaction>
</comment>
<comment type="cofactor">
    <cofactor evidence="1">
        <name>Mg(2+)</name>
        <dbReference type="ChEBI" id="CHEBI:18420"/>
    </cofactor>
</comment>
<comment type="pathway">
    <text evidence="1">Pyrimidine metabolism; UMP biosynthesis via de novo pathway; UMP from orotate: step 1/2.</text>
</comment>
<comment type="subunit">
    <text evidence="1">Homodimer.</text>
</comment>
<comment type="similarity">
    <text evidence="1">Belongs to the purine/pyrimidine phosphoribosyltransferase family. PyrE subfamily.</text>
</comment>
<dbReference type="EC" id="2.4.2.10" evidence="1"/>
<dbReference type="EMBL" id="AE007869">
    <property type="protein sequence ID" value="AAK86215.2"/>
    <property type="molecule type" value="Genomic_DNA"/>
</dbReference>
<dbReference type="PIR" id="AG2625">
    <property type="entry name" value="AG2625"/>
</dbReference>
<dbReference type="PIR" id="F97407">
    <property type="entry name" value="F97407"/>
</dbReference>
<dbReference type="RefSeq" id="NP_353430.2">
    <property type="nucleotide sequence ID" value="NC_003062.2"/>
</dbReference>
<dbReference type="RefSeq" id="WP_010970871.1">
    <property type="nucleotide sequence ID" value="NC_003062.2"/>
</dbReference>
<dbReference type="SMR" id="Q8UI98"/>
<dbReference type="STRING" id="176299.Atu0400"/>
<dbReference type="EnsemblBacteria" id="AAK86215">
    <property type="protein sequence ID" value="AAK86215"/>
    <property type="gene ID" value="Atu0400"/>
</dbReference>
<dbReference type="GeneID" id="1132438"/>
<dbReference type="KEGG" id="atu:Atu0400"/>
<dbReference type="PATRIC" id="fig|176299.10.peg.391"/>
<dbReference type="eggNOG" id="COG0461">
    <property type="taxonomic scope" value="Bacteria"/>
</dbReference>
<dbReference type="HOGENOM" id="CLU_074878_1_1_5"/>
<dbReference type="OrthoDB" id="9802134at2"/>
<dbReference type="PhylomeDB" id="Q8UI98"/>
<dbReference type="UniPathway" id="UPA00070">
    <property type="reaction ID" value="UER00119"/>
</dbReference>
<dbReference type="Proteomes" id="UP000000813">
    <property type="component" value="Chromosome circular"/>
</dbReference>
<dbReference type="GO" id="GO:0000287">
    <property type="term" value="F:magnesium ion binding"/>
    <property type="evidence" value="ECO:0007669"/>
    <property type="project" value="UniProtKB-UniRule"/>
</dbReference>
<dbReference type="GO" id="GO:0004588">
    <property type="term" value="F:orotate phosphoribosyltransferase activity"/>
    <property type="evidence" value="ECO:0007669"/>
    <property type="project" value="UniProtKB-UniRule"/>
</dbReference>
<dbReference type="GO" id="GO:0044205">
    <property type="term" value="P:'de novo' UMP biosynthetic process"/>
    <property type="evidence" value="ECO:0007669"/>
    <property type="project" value="UniProtKB-UniRule"/>
</dbReference>
<dbReference type="GO" id="GO:0019856">
    <property type="term" value="P:pyrimidine nucleobase biosynthetic process"/>
    <property type="evidence" value="ECO:0007669"/>
    <property type="project" value="TreeGrafter"/>
</dbReference>
<dbReference type="CDD" id="cd06223">
    <property type="entry name" value="PRTases_typeI"/>
    <property type="match status" value="1"/>
</dbReference>
<dbReference type="Gene3D" id="3.40.50.2020">
    <property type="match status" value="1"/>
</dbReference>
<dbReference type="HAMAP" id="MF_01208">
    <property type="entry name" value="PyrE"/>
    <property type="match status" value="1"/>
</dbReference>
<dbReference type="InterPro" id="IPR023031">
    <property type="entry name" value="OPRT"/>
</dbReference>
<dbReference type="InterPro" id="IPR004467">
    <property type="entry name" value="Or_phspho_trans_dom"/>
</dbReference>
<dbReference type="InterPro" id="IPR000836">
    <property type="entry name" value="PRibTrfase_dom"/>
</dbReference>
<dbReference type="InterPro" id="IPR029057">
    <property type="entry name" value="PRTase-like"/>
</dbReference>
<dbReference type="NCBIfam" id="NF001729">
    <property type="entry name" value="PRK00455.1-3"/>
    <property type="match status" value="1"/>
</dbReference>
<dbReference type="NCBIfam" id="TIGR00336">
    <property type="entry name" value="pyrE"/>
    <property type="match status" value="1"/>
</dbReference>
<dbReference type="PANTHER" id="PTHR19278">
    <property type="entry name" value="OROTATE PHOSPHORIBOSYLTRANSFERASE"/>
    <property type="match status" value="1"/>
</dbReference>
<dbReference type="PANTHER" id="PTHR19278:SF9">
    <property type="entry name" value="URIDINE 5'-MONOPHOSPHATE SYNTHASE"/>
    <property type="match status" value="1"/>
</dbReference>
<dbReference type="Pfam" id="PF00156">
    <property type="entry name" value="Pribosyltran"/>
    <property type="match status" value="1"/>
</dbReference>
<dbReference type="SUPFAM" id="SSF53271">
    <property type="entry name" value="PRTase-like"/>
    <property type="match status" value="1"/>
</dbReference>
<accession>Q8UI98</accession>
<evidence type="ECO:0000255" key="1">
    <source>
        <dbReference type="HAMAP-Rule" id="MF_01208"/>
    </source>
</evidence>
<gene>
    <name evidence="1" type="primary">pyrE</name>
    <name type="ordered locus">Atu0400</name>
    <name type="ORF">AGR_C_704</name>
</gene>
<reference key="1">
    <citation type="journal article" date="2001" name="Science">
        <title>The genome of the natural genetic engineer Agrobacterium tumefaciens C58.</title>
        <authorList>
            <person name="Wood D.W."/>
            <person name="Setubal J.C."/>
            <person name="Kaul R."/>
            <person name="Monks D.E."/>
            <person name="Kitajima J.P."/>
            <person name="Okura V.K."/>
            <person name="Zhou Y."/>
            <person name="Chen L."/>
            <person name="Wood G.E."/>
            <person name="Almeida N.F. Jr."/>
            <person name="Woo L."/>
            <person name="Chen Y."/>
            <person name="Paulsen I.T."/>
            <person name="Eisen J.A."/>
            <person name="Karp P.D."/>
            <person name="Bovee D. Sr."/>
            <person name="Chapman P."/>
            <person name="Clendenning J."/>
            <person name="Deatherage G."/>
            <person name="Gillet W."/>
            <person name="Grant C."/>
            <person name="Kutyavin T."/>
            <person name="Levy R."/>
            <person name="Li M.-J."/>
            <person name="McClelland E."/>
            <person name="Palmieri A."/>
            <person name="Raymond C."/>
            <person name="Rouse G."/>
            <person name="Saenphimmachak C."/>
            <person name="Wu Z."/>
            <person name="Romero P."/>
            <person name="Gordon D."/>
            <person name="Zhang S."/>
            <person name="Yoo H."/>
            <person name="Tao Y."/>
            <person name="Biddle P."/>
            <person name="Jung M."/>
            <person name="Krespan W."/>
            <person name="Perry M."/>
            <person name="Gordon-Kamm B."/>
            <person name="Liao L."/>
            <person name="Kim S."/>
            <person name="Hendrick C."/>
            <person name="Zhao Z.-Y."/>
            <person name="Dolan M."/>
            <person name="Chumley F."/>
            <person name="Tingey S.V."/>
            <person name="Tomb J.-F."/>
            <person name="Gordon M.P."/>
            <person name="Olson M.V."/>
            <person name="Nester E.W."/>
        </authorList>
    </citation>
    <scope>NUCLEOTIDE SEQUENCE [LARGE SCALE GENOMIC DNA]</scope>
    <source>
        <strain>C58 / ATCC 33970</strain>
    </source>
</reference>
<reference key="2">
    <citation type="journal article" date="2001" name="Science">
        <title>Genome sequence of the plant pathogen and biotechnology agent Agrobacterium tumefaciens C58.</title>
        <authorList>
            <person name="Goodner B."/>
            <person name="Hinkle G."/>
            <person name="Gattung S."/>
            <person name="Miller N."/>
            <person name="Blanchard M."/>
            <person name="Qurollo B."/>
            <person name="Goldman B.S."/>
            <person name="Cao Y."/>
            <person name="Askenazi M."/>
            <person name="Halling C."/>
            <person name="Mullin L."/>
            <person name="Houmiel K."/>
            <person name="Gordon J."/>
            <person name="Vaudin M."/>
            <person name="Iartchouk O."/>
            <person name="Epp A."/>
            <person name="Liu F."/>
            <person name="Wollam C."/>
            <person name="Allinger M."/>
            <person name="Doughty D."/>
            <person name="Scott C."/>
            <person name="Lappas C."/>
            <person name="Markelz B."/>
            <person name="Flanagan C."/>
            <person name="Crowell C."/>
            <person name="Gurson J."/>
            <person name="Lomo C."/>
            <person name="Sear C."/>
            <person name="Strub G."/>
            <person name="Cielo C."/>
            <person name="Slater S."/>
        </authorList>
    </citation>
    <scope>NUCLEOTIDE SEQUENCE [LARGE SCALE GENOMIC DNA]</scope>
    <source>
        <strain>C58 / ATCC 33970</strain>
    </source>
</reference>
<sequence>MNHFTFTDRTVVAELVAKMLWEIKAVHFNSESPYTFASGMKSPVYIDMRKLISFPRIRSAAMDFAAAAVMREAGFEKFDCVAGGETAGIPFAAFLAERLGLPMIYCRKKPKGHGRNAQIEGHMPDGARVLVIEDLTTAGGSMFTFIDAIRAAGGIVDHGIALFYYGIFEEAEARFANGNVKLHYLTTWRDVLAVARAEKLFDEKTLSGVEAFLDNPLPWSAKHGGVSELPQS</sequence>
<keyword id="KW-0328">Glycosyltransferase</keyword>
<keyword id="KW-0460">Magnesium</keyword>
<keyword id="KW-0665">Pyrimidine biosynthesis</keyword>
<keyword id="KW-1185">Reference proteome</keyword>
<keyword id="KW-0808">Transferase</keyword>
<protein>
    <recommendedName>
        <fullName evidence="1">Orotate phosphoribosyltransferase</fullName>
        <shortName evidence="1">OPRT</shortName>
        <shortName evidence="1">OPRTase</shortName>
        <ecNumber evidence="1">2.4.2.10</ecNumber>
    </recommendedName>
</protein>
<name>PYRE_AGRFC</name>
<feature type="chain" id="PRO_0000110662" description="Orotate phosphoribosyltransferase">
    <location>
        <begin position="1"/>
        <end position="232"/>
    </location>
</feature>
<feature type="binding site" evidence="1">
    <location>
        <position position="107"/>
    </location>
    <ligand>
        <name>5-phospho-alpha-D-ribose 1-diphosphate</name>
        <dbReference type="ChEBI" id="CHEBI:58017"/>
        <note>ligand shared between dimeric partners</note>
    </ligand>
</feature>
<feature type="binding site" description="in other chain" evidence="1">
    <location>
        <position position="108"/>
    </location>
    <ligand>
        <name>5-phospho-alpha-D-ribose 1-diphosphate</name>
        <dbReference type="ChEBI" id="CHEBI:58017"/>
        <note>ligand shared between dimeric partners</note>
    </ligand>
</feature>
<feature type="binding site" evidence="1">
    <location>
        <position position="111"/>
    </location>
    <ligand>
        <name>5-phospho-alpha-D-ribose 1-diphosphate</name>
        <dbReference type="ChEBI" id="CHEBI:58017"/>
        <note>ligand shared between dimeric partners</note>
    </ligand>
</feature>
<feature type="binding site" evidence="1">
    <location>
        <position position="113"/>
    </location>
    <ligand>
        <name>5-phospho-alpha-D-ribose 1-diphosphate</name>
        <dbReference type="ChEBI" id="CHEBI:58017"/>
        <note>ligand shared between dimeric partners</note>
    </ligand>
</feature>
<feature type="binding site" description="in other chain" evidence="1">
    <location>
        <begin position="133"/>
        <end position="141"/>
    </location>
    <ligand>
        <name>5-phospho-alpha-D-ribose 1-diphosphate</name>
        <dbReference type="ChEBI" id="CHEBI:58017"/>
        <note>ligand shared between dimeric partners</note>
    </ligand>
</feature>
<feature type="binding site" evidence="1">
    <location>
        <position position="137"/>
    </location>
    <ligand>
        <name>orotate</name>
        <dbReference type="ChEBI" id="CHEBI:30839"/>
    </ligand>
</feature>